<accession>P60954</accession>
<reference key="1">
    <citation type="journal article" date="2005" name="Science">
        <title>The transcriptional landscape of the mammalian genome.</title>
        <authorList>
            <person name="Carninci P."/>
            <person name="Kasukawa T."/>
            <person name="Katayama S."/>
            <person name="Gough J."/>
            <person name="Frith M.C."/>
            <person name="Maeda N."/>
            <person name="Oyama R."/>
            <person name="Ravasi T."/>
            <person name="Lenhard B."/>
            <person name="Wells C."/>
            <person name="Kodzius R."/>
            <person name="Shimokawa K."/>
            <person name="Bajic V.B."/>
            <person name="Brenner S.E."/>
            <person name="Batalov S."/>
            <person name="Forrest A.R."/>
            <person name="Zavolan M."/>
            <person name="Davis M.J."/>
            <person name="Wilming L.G."/>
            <person name="Aidinis V."/>
            <person name="Allen J.E."/>
            <person name="Ambesi-Impiombato A."/>
            <person name="Apweiler R."/>
            <person name="Aturaliya R.N."/>
            <person name="Bailey T.L."/>
            <person name="Bansal M."/>
            <person name="Baxter L."/>
            <person name="Beisel K.W."/>
            <person name="Bersano T."/>
            <person name="Bono H."/>
            <person name="Chalk A.M."/>
            <person name="Chiu K.P."/>
            <person name="Choudhary V."/>
            <person name="Christoffels A."/>
            <person name="Clutterbuck D.R."/>
            <person name="Crowe M.L."/>
            <person name="Dalla E."/>
            <person name="Dalrymple B.P."/>
            <person name="de Bono B."/>
            <person name="Della Gatta G."/>
            <person name="di Bernardo D."/>
            <person name="Down T."/>
            <person name="Engstrom P."/>
            <person name="Fagiolini M."/>
            <person name="Faulkner G."/>
            <person name="Fletcher C.F."/>
            <person name="Fukushima T."/>
            <person name="Furuno M."/>
            <person name="Futaki S."/>
            <person name="Gariboldi M."/>
            <person name="Georgii-Hemming P."/>
            <person name="Gingeras T.R."/>
            <person name="Gojobori T."/>
            <person name="Green R.E."/>
            <person name="Gustincich S."/>
            <person name="Harbers M."/>
            <person name="Hayashi Y."/>
            <person name="Hensch T.K."/>
            <person name="Hirokawa N."/>
            <person name="Hill D."/>
            <person name="Huminiecki L."/>
            <person name="Iacono M."/>
            <person name="Ikeo K."/>
            <person name="Iwama A."/>
            <person name="Ishikawa T."/>
            <person name="Jakt M."/>
            <person name="Kanapin A."/>
            <person name="Katoh M."/>
            <person name="Kawasawa Y."/>
            <person name="Kelso J."/>
            <person name="Kitamura H."/>
            <person name="Kitano H."/>
            <person name="Kollias G."/>
            <person name="Krishnan S.P."/>
            <person name="Kruger A."/>
            <person name="Kummerfeld S.K."/>
            <person name="Kurochkin I.V."/>
            <person name="Lareau L.F."/>
            <person name="Lazarevic D."/>
            <person name="Lipovich L."/>
            <person name="Liu J."/>
            <person name="Liuni S."/>
            <person name="McWilliam S."/>
            <person name="Madan Babu M."/>
            <person name="Madera M."/>
            <person name="Marchionni L."/>
            <person name="Matsuda H."/>
            <person name="Matsuzawa S."/>
            <person name="Miki H."/>
            <person name="Mignone F."/>
            <person name="Miyake S."/>
            <person name="Morris K."/>
            <person name="Mottagui-Tabar S."/>
            <person name="Mulder N."/>
            <person name="Nakano N."/>
            <person name="Nakauchi H."/>
            <person name="Ng P."/>
            <person name="Nilsson R."/>
            <person name="Nishiguchi S."/>
            <person name="Nishikawa S."/>
            <person name="Nori F."/>
            <person name="Ohara O."/>
            <person name="Okazaki Y."/>
            <person name="Orlando V."/>
            <person name="Pang K.C."/>
            <person name="Pavan W.J."/>
            <person name="Pavesi G."/>
            <person name="Pesole G."/>
            <person name="Petrovsky N."/>
            <person name="Piazza S."/>
            <person name="Reed J."/>
            <person name="Reid J.F."/>
            <person name="Ring B.Z."/>
            <person name="Ringwald M."/>
            <person name="Rost B."/>
            <person name="Ruan Y."/>
            <person name="Salzberg S.L."/>
            <person name="Sandelin A."/>
            <person name="Schneider C."/>
            <person name="Schoenbach C."/>
            <person name="Sekiguchi K."/>
            <person name="Semple C.A."/>
            <person name="Seno S."/>
            <person name="Sessa L."/>
            <person name="Sheng Y."/>
            <person name="Shibata Y."/>
            <person name="Shimada H."/>
            <person name="Shimada K."/>
            <person name="Silva D."/>
            <person name="Sinclair B."/>
            <person name="Sperling S."/>
            <person name="Stupka E."/>
            <person name="Sugiura K."/>
            <person name="Sultana R."/>
            <person name="Takenaka Y."/>
            <person name="Taki K."/>
            <person name="Tammoja K."/>
            <person name="Tan S.L."/>
            <person name="Tang S."/>
            <person name="Taylor M.S."/>
            <person name="Tegner J."/>
            <person name="Teichmann S.A."/>
            <person name="Ueda H.R."/>
            <person name="van Nimwegen E."/>
            <person name="Verardo R."/>
            <person name="Wei C.L."/>
            <person name="Yagi K."/>
            <person name="Yamanishi H."/>
            <person name="Zabarovsky E."/>
            <person name="Zhu S."/>
            <person name="Zimmer A."/>
            <person name="Hide W."/>
            <person name="Bult C."/>
            <person name="Grimmond S.M."/>
            <person name="Teasdale R.D."/>
            <person name="Liu E.T."/>
            <person name="Brusic V."/>
            <person name="Quackenbush J."/>
            <person name="Wahlestedt C."/>
            <person name="Mattick J.S."/>
            <person name="Hume D.A."/>
            <person name="Kai C."/>
            <person name="Sasaki D."/>
            <person name="Tomaru Y."/>
            <person name="Fukuda S."/>
            <person name="Kanamori-Katayama M."/>
            <person name="Suzuki M."/>
            <person name="Aoki J."/>
            <person name="Arakawa T."/>
            <person name="Iida J."/>
            <person name="Imamura K."/>
            <person name="Itoh M."/>
            <person name="Kato T."/>
            <person name="Kawaji H."/>
            <person name="Kawagashira N."/>
            <person name="Kawashima T."/>
            <person name="Kojima M."/>
            <person name="Kondo S."/>
            <person name="Konno H."/>
            <person name="Nakano K."/>
            <person name="Ninomiya N."/>
            <person name="Nishio T."/>
            <person name="Okada M."/>
            <person name="Plessy C."/>
            <person name="Shibata K."/>
            <person name="Shiraki T."/>
            <person name="Suzuki S."/>
            <person name="Tagami M."/>
            <person name="Waki K."/>
            <person name="Watahiki A."/>
            <person name="Okamura-Oho Y."/>
            <person name="Suzuki H."/>
            <person name="Kawai J."/>
            <person name="Hayashizaki Y."/>
        </authorList>
    </citation>
    <scope>NUCLEOTIDE SEQUENCE [LARGE SCALE MRNA] (ISOFORM 1)</scope>
</reference>
<reference key="2">
    <citation type="journal article" date="2004" name="Genome Res.">
        <title>The status, quality, and expansion of the NIH full-length cDNA project: the Mammalian Gene Collection (MGC).</title>
        <authorList>
            <consortium name="The MGC Project Team"/>
        </authorList>
    </citation>
    <scope>NUCLEOTIDE SEQUENCE [LARGE SCALE MRNA] (ISOFORM 2)</scope>
    <source>
        <strain>C57BL/6J</strain>
        <tissue>Brain</tissue>
    </source>
</reference>
<proteinExistence type="evidence at transcript level"/>
<protein>
    <recommendedName>
        <fullName>Nucleolar protein 4</fullName>
    </recommendedName>
</protein>
<feature type="chain" id="PRO_0000096936" description="Nucleolar protein 4">
    <location>
        <begin position="1"/>
        <end position="483"/>
    </location>
</feature>
<feature type="region of interest" description="Disordered" evidence="2">
    <location>
        <begin position="210"/>
        <end position="418"/>
    </location>
</feature>
<feature type="region of interest" description="Disordered" evidence="2">
    <location>
        <begin position="435"/>
        <end position="483"/>
    </location>
</feature>
<feature type="compositionally biased region" description="Acidic residues" evidence="2">
    <location>
        <begin position="211"/>
        <end position="225"/>
    </location>
</feature>
<feature type="compositionally biased region" description="Polar residues" evidence="2">
    <location>
        <begin position="229"/>
        <end position="254"/>
    </location>
</feature>
<feature type="compositionally biased region" description="Polar residues" evidence="2">
    <location>
        <begin position="262"/>
        <end position="271"/>
    </location>
</feature>
<feature type="compositionally biased region" description="Polar residues" evidence="2">
    <location>
        <begin position="302"/>
        <end position="317"/>
    </location>
</feature>
<feature type="compositionally biased region" description="Basic and acidic residues" evidence="2">
    <location>
        <begin position="319"/>
        <end position="330"/>
    </location>
</feature>
<feature type="compositionally biased region" description="Basic and acidic residues" evidence="2">
    <location>
        <begin position="340"/>
        <end position="350"/>
    </location>
</feature>
<feature type="compositionally biased region" description="Polar residues" evidence="2">
    <location>
        <begin position="351"/>
        <end position="363"/>
    </location>
</feature>
<feature type="compositionally biased region" description="Basic and acidic residues" evidence="2">
    <location>
        <begin position="364"/>
        <end position="374"/>
    </location>
</feature>
<feature type="compositionally biased region" description="Basic and acidic residues" evidence="2">
    <location>
        <begin position="391"/>
        <end position="409"/>
    </location>
</feature>
<feature type="compositionally biased region" description="Basic and acidic residues" evidence="2">
    <location>
        <begin position="435"/>
        <end position="451"/>
    </location>
</feature>
<feature type="compositionally biased region" description="Polar residues" evidence="2">
    <location>
        <begin position="467"/>
        <end position="483"/>
    </location>
</feature>
<feature type="splice variant" id="VSP_040778" description="In isoform 2." evidence="3">
    <original>MESERDMYRQFQDWCLRTYGDSGKTKTVTRKKYERIVQLLNGSESSSTDNAKFKFWVKSKGFQLGQPDEVRGGGGGAKQVLFVRVKTT</original>
    <variation>MHERLFQAPSGGLSQ</variation>
    <location>
        <begin position="1"/>
        <end position="88"/>
    </location>
</feature>
<feature type="splice variant" id="VSP_040779" description="In isoform 2." evidence="3">
    <original>N</original>
    <variation>NMFVRLFVDENLDRMVPISKQPKEKIQAIIDSCRRQFPEYQERARKRIRTYLKSCRRMKRSGFEM</variation>
    <location>
        <position position="412"/>
    </location>
</feature>
<feature type="splice variant" id="VSP_040780" description="In isoform 2." evidence="3">
    <original>DPQI</original>
    <variation>VLYINGNGTYSYHSYRGLGGLLSLDDTSSSGPTDLSMKRQLATGSGSSSSSTSRPQLSPTEINAVRQLVAGYRESAAFLLRSADELENLILQQN</variation>
    <location>
        <begin position="480"/>
        <end position="483"/>
    </location>
</feature>
<evidence type="ECO:0000250" key="1"/>
<evidence type="ECO:0000256" key="2">
    <source>
        <dbReference type="SAM" id="MobiDB-lite"/>
    </source>
</evidence>
<evidence type="ECO:0000303" key="3">
    <source>
    </source>
</evidence>
<evidence type="ECO:0000305" key="4"/>
<dbReference type="EMBL" id="AK031008">
    <property type="status" value="NOT_ANNOTATED_CDS"/>
    <property type="molecule type" value="mRNA"/>
</dbReference>
<dbReference type="EMBL" id="BC056377">
    <property type="protein sequence ID" value="AAH56377.1"/>
    <property type="status" value="ALT_INIT"/>
    <property type="molecule type" value="mRNA"/>
</dbReference>
<dbReference type="CCDS" id="CCDS29093.2">
    <molecule id="P60954-1"/>
</dbReference>
<dbReference type="CCDS" id="CCDS50235.1">
    <molecule id="P60954-2"/>
</dbReference>
<dbReference type="RefSeq" id="NP_001154955.1">
    <molecule id="P60954-2"/>
    <property type="nucleotide sequence ID" value="NM_001161483.1"/>
</dbReference>
<dbReference type="RefSeq" id="NP_950189.2">
    <molecule id="P60954-1"/>
    <property type="nucleotide sequence ID" value="NM_199024.3"/>
</dbReference>
<dbReference type="RefSeq" id="XP_006526062.1">
    <property type="nucleotide sequence ID" value="XM_006525999.2"/>
</dbReference>
<dbReference type="SMR" id="P60954"/>
<dbReference type="BioGRID" id="235122">
    <property type="interactions" value="1"/>
</dbReference>
<dbReference type="FunCoup" id="P60954">
    <property type="interactions" value="360"/>
</dbReference>
<dbReference type="STRING" id="10090.ENSMUSP00000130950"/>
<dbReference type="iPTMnet" id="P60954"/>
<dbReference type="PhosphoSitePlus" id="P60954"/>
<dbReference type="jPOST" id="P60954"/>
<dbReference type="ProteomicsDB" id="293674">
    <molecule id="P60954-1"/>
</dbReference>
<dbReference type="ProteomicsDB" id="293675">
    <molecule id="P60954-2"/>
</dbReference>
<dbReference type="Antibodypedia" id="8389">
    <property type="antibodies" value="115 antibodies from 24 providers"/>
</dbReference>
<dbReference type="DNASU" id="319211"/>
<dbReference type="Ensembl" id="ENSMUST00000081423.13">
    <molecule id="P60954-2"/>
    <property type="protein sequence ID" value="ENSMUSP00000080150.7"/>
    <property type="gene ID" value="ENSMUSG00000041923.16"/>
</dbReference>
<dbReference type="Ensembl" id="ENSMUST00000097651.10">
    <molecule id="P60954-1"/>
    <property type="protein sequence ID" value="ENSMUSP00000095256.4"/>
    <property type="gene ID" value="ENSMUSG00000041923.16"/>
</dbReference>
<dbReference type="GeneID" id="319211"/>
<dbReference type="KEGG" id="mmu:319211"/>
<dbReference type="UCSC" id="uc008efq.2">
    <molecule id="P60954-2"/>
    <property type="organism name" value="mouse"/>
</dbReference>
<dbReference type="UCSC" id="uc008efr.2">
    <molecule id="P60954-1"/>
    <property type="organism name" value="mouse"/>
</dbReference>
<dbReference type="AGR" id="MGI:2441684"/>
<dbReference type="CTD" id="8715"/>
<dbReference type="MGI" id="MGI:2441684">
    <property type="gene designation" value="Nol4"/>
</dbReference>
<dbReference type="VEuPathDB" id="HostDB:ENSMUSG00000041923"/>
<dbReference type="eggNOG" id="ENOG502QR3R">
    <property type="taxonomic scope" value="Eukaryota"/>
</dbReference>
<dbReference type="GeneTree" id="ENSGT00940000159992"/>
<dbReference type="InParanoid" id="P60954"/>
<dbReference type="OrthoDB" id="10047222at2759"/>
<dbReference type="PhylomeDB" id="P60954"/>
<dbReference type="TreeFam" id="TF325594"/>
<dbReference type="BioGRID-ORCS" id="319211">
    <property type="hits" value="1 hit in 28 CRISPR screens"/>
</dbReference>
<dbReference type="ChiTaRS" id="Nol4">
    <property type="organism name" value="mouse"/>
</dbReference>
<dbReference type="PRO" id="PR:P60954"/>
<dbReference type="Proteomes" id="UP000000589">
    <property type="component" value="Chromosome 18"/>
</dbReference>
<dbReference type="RNAct" id="P60954">
    <property type="molecule type" value="protein"/>
</dbReference>
<dbReference type="Bgee" id="ENSMUSG00000041923">
    <property type="expression patterns" value="Expressed in rostral migratory stream and 117 other cell types or tissues"/>
</dbReference>
<dbReference type="ExpressionAtlas" id="P60954">
    <property type="expression patterns" value="baseline and differential"/>
</dbReference>
<dbReference type="GO" id="GO:0005730">
    <property type="term" value="C:nucleolus"/>
    <property type="evidence" value="ECO:0007669"/>
    <property type="project" value="UniProtKB-SubCell"/>
</dbReference>
<dbReference type="InterPro" id="IPR056549">
    <property type="entry name" value="HTH_NOL4"/>
</dbReference>
<dbReference type="InterPro" id="IPR039788">
    <property type="entry name" value="NOL4/NOL4L"/>
</dbReference>
<dbReference type="PANTHER" id="PTHR12449">
    <property type="entry name" value="DEATH DOMAIN-CONTAINING PROTEIN"/>
    <property type="match status" value="1"/>
</dbReference>
<dbReference type="PANTHER" id="PTHR12449:SF17">
    <property type="entry name" value="NUCLEOLAR PROTEIN 4"/>
    <property type="match status" value="1"/>
</dbReference>
<dbReference type="Pfam" id="PF23079">
    <property type="entry name" value="HTH_NOL4_2nd"/>
    <property type="match status" value="1"/>
</dbReference>
<name>NOL4_MOUSE</name>
<gene>
    <name type="primary">Nol4</name>
    <name type="synonym">Gm1262</name>
</gene>
<sequence length="483" mass="53479">MESERDMYRQFQDWCLRTYGDSGKTKTVTRKKYERIVQLLNGSESSSTDNAKFKFWVKSKGFQLGQPDEVRGGGGGAKQVLFVRVKTTDGVGVDEKLSLRRVAVVEDFFDIIYSMHVETGPNGEQIRKHAGQKRTYKAISESYAFLPREAVTRFLMSCSECQKRMHLNPDGTDHKDNGKPPTLVTSMIDYNMPITMAYMKHMKLQLLNSQQDEDESSIESDEFDMSDSTRMSAVNSDLSSNLEERMQSPQTVHGQQDDDSAAESSNGNETLGHSSAASGGAHGREPEDSSSDGKTGLEQEEQPLNLSDSPSSAQLTSEFRIDDQGSDGKNKYKNLLISDLKMEREARENGSKSPAHSYSSYDSGKNESVDRGAEDLSLNRGDEDEDEHDEHEDSEKVNETDGVEAERLKAFNSRPIPSHLTSAVAESILASACESESRNAAKRMRLDKAQDEAAPADKQCKPEAAQATYSTATVPGSQEDPQI</sequence>
<keyword id="KW-0025">Alternative splicing</keyword>
<keyword id="KW-0539">Nucleus</keyword>
<keyword id="KW-1185">Reference proteome</keyword>
<organism>
    <name type="scientific">Mus musculus</name>
    <name type="common">Mouse</name>
    <dbReference type="NCBI Taxonomy" id="10090"/>
    <lineage>
        <taxon>Eukaryota</taxon>
        <taxon>Metazoa</taxon>
        <taxon>Chordata</taxon>
        <taxon>Craniata</taxon>
        <taxon>Vertebrata</taxon>
        <taxon>Euteleostomi</taxon>
        <taxon>Mammalia</taxon>
        <taxon>Eutheria</taxon>
        <taxon>Euarchontoglires</taxon>
        <taxon>Glires</taxon>
        <taxon>Rodentia</taxon>
        <taxon>Myomorpha</taxon>
        <taxon>Muroidea</taxon>
        <taxon>Muridae</taxon>
        <taxon>Murinae</taxon>
        <taxon>Mus</taxon>
        <taxon>Mus</taxon>
    </lineage>
</organism>
<comment type="subcellular location">
    <subcellularLocation>
        <location evidence="1">Nucleus</location>
        <location evidence="1">Nucleolus</location>
    </subcellularLocation>
</comment>
<comment type="alternative products">
    <event type="alternative splicing"/>
    <isoform>
        <id>P60954-1</id>
        <name>1</name>
        <sequence type="displayed"/>
    </isoform>
    <isoform>
        <id>P60954-2</id>
        <name>2</name>
        <sequence type="described" ref="VSP_040778 VSP_040779 VSP_040780"/>
    </isoform>
</comment>
<comment type="sequence caution" evidence="4">
    <conflict type="erroneous initiation">
        <sequence resource="EMBL-CDS" id="AAH56377"/>
    </conflict>
    <text>Truncated N-terminus.</text>
</comment>